<protein>
    <recommendedName>
        <fullName>Uncharacterized aldolase SSO3226</fullName>
        <ecNumber>4.2.1.-</ecNumber>
    </recommendedName>
</protein>
<sequence>MIGSEIRMAKLFDKGRALVVALDHGLVMGPLKGIENPVEVVAKIAKNGPDALQMTPSMVKLVKENFFSRGSPMLITRLDTANVWRQKYKVYNEGYYASIYTVKDAISAGADAVVTYLVVGYGNDTVEGYNLSVLSSLRKEANDYGIPFIVEPLYVTKDNPDSVKEVDLVKYVTRLASEIGADILKVDYTGNKESFRQVINVAFSPILIRGGPKTNTTEEFLRMLRDALEAGAKGVTVGRNLWQAEEPDKLAKAISKVIHENADIGEALKILK</sequence>
<reference key="1">
    <citation type="journal article" date="2001" name="Proc. Natl. Acad. Sci. U.S.A.">
        <title>The complete genome of the crenarchaeon Sulfolobus solfataricus P2.</title>
        <authorList>
            <person name="She Q."/>
            <person name="Singh R.K."/>
            <person name="Confalonieri F."/>
            <person name="Zivanovic Y."/>
            <person name="Allard G."/>
            <person name="Awayez M.J."/>
            <person name="Chan-Weiher C.C.-Y."/>
            <person name="Clausen I.G."/>
            <person name="Curtis B.A."/>
            <person name="De Moors A."/>
            <person name="Erauso G."/>
            <person name="Fletcher C."/>
            <person name="Gordon P.M.K."/>
            <person name="Heikamp-de Jong I."/>
            <person name="Jeffries A.C."/>
            <person name="Kozera C.J."/>
            <person name="Medina N."/>
            <person name="Peng X."/>
            <person name="Thi-Ngoc H.P."/>
            <person name="Redder P."/>
            <person name="Schenk M.E."/>
            <person name="Theriault C."/>
            <person name="Tolstrup N."/>
            <person name="Charlebois R.L."/>
            <person name="Doolittle W.F."/>
            <person name="Duguet M."/>
            <person name="Gaasterland T."/>
            <person name="Garrett R.A."/>
            <person name="Ragan M.A."/>
            <person name="Sensen C.W."/>
            <person name="Van der Oost J."/>
        </authorList>
    </citation>
    <scope>NUCLEOTIDE SEQUENCE [LARGE SCALE GENOMIC DNA]</scope>
    <source>
        <strain>ATCC 35092 / DSM 1617 / JCM 11322 / P2</strain>
    </source>
</reference>
<feature type="chain" id="PRO_0000138960" description="Uncharacterized aldolase SSO3226">
    <location>
        <begin position="1"/>
        <end position="272"/>
    </location>
</feature>
<feature type="active site" description="Schiff-base intermediate with substrate" evidence="1">
    <location>
        <position position="185"/>
    </location>
</feature>
<keyword id="KW-0456">Lyase</keyword>
<keyword id="KW-1185">Reference proteome</keyword>
<keyword id="KW-0704">Schiff base</keyword>
<name>Y3226_SACS2</name>
<evidence type="ECO:0000250" key="1"/>
<evidence type="ECO:0000305" key="2"/>
<proteinExistence type="inferred from homology"/>
<comment type="similarity">
    <text evidence="2">Belongs to the DeoC/FbaB aldolase family.</text>
</comment>
<dbReference type="EC" id="4.2.1.-"/>
<dbReference type="EMBL" id="AE006641">
    <property type="protein sequence ID" value="AAK43321.1"/>
    <property type="molecule type" value="Genomic_DNA"/>
</dbReference>
<dbReference type="PIR" id="B90508">
    <property type="entry name" value="B90508"/>
</dbReference>
<dbReference type="RefSeq" id="WP_010924169.1">
    <property type="nucleotide sequence ID" value="NC_002754.1"/>
</dbReference>
<dbReference type="SMR" id="Q97U03"/>
<dbReference type="FunCoup" id="Q97U03">
    <property type="interactions" value="199"/>
</dbReference>
<dbReference type="STRING" id="273057.SSO3226"/>
<dbReference type="PaxDb" id="273057-SSO3226"/>
<dbReference type="EnsemblBacteria" id="AAK43321">
    <property type="protein sequence ID" value="AAK43321"/>
    <property type="gene ID" value="SSO3226"/>
</dbReference>
<dbReference type="GeneID" id="1453240"/>
<dbReference type="KEGG" id="sso:SSO3226"/>
<dbReference type="PATRIC" id="fig|273057.12.peg.3328"/>
<dbReference type="eggNOG" id="arCOG04044">
    <property type="taxonomic scope" value="Archaea"/>
</dbReference>
<dbReference type="HOGENOM" id="CLU_057069_2_1_2"/>
<dbReference type="InParanoid" id="Q97U03"/>
<dbReference type="PhylomeDB" id="Q97U03"/>
<dbReference type="Proteomes" id="UP000001974">
    <property type="component" value="Chromosome"/>
</dbReference>
<dbReference type="GO" id="GO:0016747">
    <property type="term" value="F:acyltransferase activity, transferring groups other than amino-acyl groups"/>
    <property type="evidence" value="ECO:0000318"/>
    <property type="project" value="GO_Central"/>
</dbReference>
<dbReference type="GO" id="GO:0004332">
    <property type="term" value="F:fructose-bisphosphate aldolase activity"/>
    <property type="evidence" value="ECO:0007669"/>
    <property type="project" value="InterPro"/>
</dbReference>
<dbReference type="CDD" id="cd00958">
    <property type="entry name" value="DhnA"/>
    <property type="match status" value="1"/>
</dbReference>
<dbReference type="Gene3D" id="3.20.20.70">
    <property type="entry name" value="Aldolase class I"/>
    <property type="match status" value="1"/>
</dbReference>
<dbReference type="InterPro" id="IPR013785">
    <property type="entry name" value="Aldolase_TIM"/>
</dbReference>
<dbReference type="InterPro" id="IPR002915">
    <property type="entry name" value="DeoC/FbaB/LacD_aldolase"/>
</dbReference>
<dbReference type="InterPro" id="IPR050456">
    <property type="entry name" value="DeoC/FbaB_aldolase"/>
</dbReference>
<dbReference type="InterPro" id="IPR041720">
    <property type="entry name" value="FbaB-like"/>
</dbReference>
<dbReference type="PANTHER" id="PTHR47916:SF1">
    <property type="entry name" value="3-HYDROXY-5-PHOSPHONOOXYPENTANE-2,4-DIONE THIOLASE"/>
    <property type="match status" value="1"/>
</dbReference>
<dbReference type="PANTHER" id="PTHR47916">
    <property type="entry name" value="FRUCTOSE-BISPHOSPHATE ALDOLASE CLASS 1"/>
    <property type="match status" value="1"/>
</dbReference>
<dbReference type="Pfam" id="PF01791">
    <property type="entry name" value="DeoC"/>
    <property type="match status" value="1"/>
</dbReference>
<dbReference type="PIRSF" id="PIRSF038992">
    <property type="entry name" value="Aldolase_Ia"/>
    <property type="match status" value="1"/>
</dbReference>
<dbReference type="SMART" id="SM01133">
    <property type="entry name" value="DeoC"/>
    <property type="match status" value="1"/>
</dbReference>
<dbReference type="SUPFAM" id="SSF51569">
    <property type="entry name" value="Aldolase"/>
    <property type="match status" value="1"/>
</dbReference>
<organism>
    <name type="scientific">Saccharolobus solfataricus (strain ATCC 35092 / DSM 1617 / JCM 11322 / P2)</name>
    <name type="common">Sulfolobus solfataricus</name>
    <dbReference type="NCBI Taxonomy" id="273057"/>
    <lineage>
        <taxon>Archaea</taxon>
        <taxon>Thermoproteota</taxon>
        <taxon>Thermoprotei</taxon>
        <taxon>Sulfolobales</taxon>
        <taxon>Sulfolobaceae</taxon>
        <taxon>Saccharolobus</taxon>
    </lineage>
</organism>
<gene>
    <name type="ordered locus">SSO3226</name>
</gene>
<accession>Q97U03</accession>